<gene>
    <name type="primary">PLEKHH3</name>
</gene>
<comment type="alternative products">
    <event type="alternative splicing"/>
    <isoform>
        <id>Q7Z736-1</id>
        <name>1</name>
        <sequence type="displayed"/>
    </isoform>
    <isoform>
        <id>Q7Z736-2</id>
        <name>2</name>
        <sequence type="described" ref="VSP_029392 VSP_029396 VSP_029398"/>
    </isoform>
    <isoform>
        <id>Q7Z736-3</id>
        <name>3</name>
        <sequence type="described" ref="VSP_029395 VSP_029397"/>
    </isoform>
    <isoform>
        <id>Q7Z736-4</id>
        <name>4</name>
        <sequence type="described" ref="VSP_029392 VSP_029393 VSP_029394"/>
    </isoform>
</comment>
<comment type="sequence caution" evidence="11">
    <conflict type="erroneous initiation">
        <sequence resource="EMBL-CDS" id="BAD92176"/>
    </conflict>
    <text>Extended N-terminus.</text>
</comment>
<keyword id="KW-0025">Alternative splicing</keyword>
<keyword id="KW-0488">Methylation</keyword>
<keyword id="KW-0597">Phosphoprotein</keyword>
<keyword id="KW-1267">Proteomics identification</keyword>
<keyword id="KW-1185">Reference proteome</keyword>
<keyword id="KW-0732">Signal</keyword>
<dbReference type="EMBL" id="AK024672">
    <property type="protein sequence ID" value="BAB14956.1"/>
    <property type="molecule type" value="mRNA"/>
</dbReference>
<dbReference type="EMBL" id="AB208939">
    <property type="protein sequence ID" value="BAD92176.1"/>
    <property type="status" value="ALT_INIT"/>
    <property type="molecule type" value="mRNA"/>
</dbReference>
<dbReference type="EMBL" id="AC067852">
    <property type="status" value="NOT_ANNOTATED_CDS"/>
    <property type="molecule type" value="Genomic_DNA"/>
</dbReference>
<dbReference type="EMBL" id="BC016062">
    <property type="protein sequence ID" value="AAH16062.1"/>
    <property type="molecule type" value="mRNA"/>
</dbReference>
<dbReference type="EMBL" id="BC052978">
    <property type="protein sequence ID" value="AAH52978.1"/>
    <property type="molecule type" value="mRNA"/>
</dbReference>
<dbReference type="EMBL" id="AL137584">
    <property type="protein sequence ID" value="CAB70826.1"/>
    <property type="molecule type" value="mRNA"/>
</dbReference>
<dbReference type="CCDS" id="CCDS11434.1">
    <molecule id="Q7Z736-1"/>
</dbReference>
<dbReference type="PIR" id="T46295">
    <property type="entry name" value="T46295"/>
</dbReference>
<dbReference type="RefSeq" id="NP_079203.3">
    <molecule id="Q7Z736-1"/>
    <property type="nucleotide sequence ID" value="NM_024927.4"/>
</dbReference>
<dbReference type="RefSeq" id="XP_047292743.1">
    <molecule id="Q7Z736-3"/>
    <property type="nucleotide sequence ID" value="XM_047436787.1"/>
</dbReference>
<dbReference type="SMR" id="Q7Z736"/>
<dbReference type="BioGRID" id="123053">
    <property type="interactions" value="80"/>
</dbReference>
<dbReference type="FunCoup" id="Q7Z736">
    <property type="interactions" value="562"/>
</dbReference>
<dbReference type="IntAct" id="Q7Z736">
    <property type="interactions" value="51"/>
</dbReference>
<dbReference type="MINT" id="Q7Z736"/>
<dbReference type="STRING" id="9606.ENSP00000468678"/>
<dbReference type="GlyGen" id="Q7Z736">
    <property type="glycosylation" value="1 site"/>
</dbReference>
<dbReference type="iPTMnet" id="Q7Z736"/>
<dbReference type="PhosphoSitePlus" id="Q7Z736"/>
<dbReference type="SwissPalm" id="Q7Z736"/>
<dbReference type="BioMuta" id="PLEKHH3"/>
<dbReference type="DMDM" id="296452865"/>
<dbReference type="jPOST" id="Q7Z736"/>
<dbReference type="MassIVE" id="Q7Z736"/>
<dbReference type="PaxDb" id="9606-ENSP00000468678"/>
<dbReference type="PeptideAtlas" id="Q7Z736"/>
<dbReference type="ProteomicsDB" id="69479">
    <molecule id="Q7Z736-1"/>
</dbReference>
<dbReference type="ProteomicsDB" id="69480">
    <molecule id="Q7Z736-2"/>
</dbReference>
<dbReference type="ProteomicsDB" id="69481">
    <molecule id="Q7Z736-3"/>
</dbReference>
<dbReference type="ProteomicsDB" id="69482">
    <molecule id="Q7Z736-4"/>
</dbReference>
<dbReference type="Pumba" id="Q7Z736"/>
<dbReference type="Antibodypedia" id="29328">
    <property type="antibodies" value="30 antibodies from 13 providers"/>
</dbReference>
<dbReference type="DNASU" id="79990"/>
<dbReference type="Ensembl" id="ENST00000591022.6">
    <molecule id="Q7Z736-1"/>
    <property type="protein sequence ID" value="ENSP00000468678.1"/>
    <property type="gene ID" value="ENSG00000068137.15"/>
</dbReference>
<dbReference type="Ensembl" id="ENST00000591196.5">
    <molecule id="Q7Z736-3"/>
    <property type="protein sequence ID" value="ENSP00000467824.1"/>
    <property type="gene ID" value="ENSG00000068137.15"/>
</dbReference>
<dbReference type="GeneID" id="79990"/>
<dbReference type="KEGG" id="hsa:79990"/>
<dbReference type="MANE-Select" id="ENST00000591022.6">
    <property type="protein sequence ID" value="ENSP00000468678.1"/>
    <property type="RefSeq nucleotide sequence ID" value="NM_024927.5"/>
    <property type="RefSeq protein sequence ID" value="NP_079203.4"/>
</dbReference>
<dbReference type="UCSC" id="uc002iau.5">
    <molecule id="Q7Z736-1"/>
    <property type="organism name" value="human"/>
</dbReference>
<dbReference type="AGR" id="HGNC:26105"/>
<dbReference type="CTD" id="79990"/>
<dbReference type="DisGeNET" id="79990"/>
<dbReference type="GeneCards" id="PLEKHH3"/>
<dbReference type="HGNC" id="HGNC:26105">
    <property type="gene designation" value="PLEKHH3"/>
</dbReference>
<dbReference type="HPA" id="ENSG00000068137">
    <property type="expression patterns" value="Low tissue specificity"/>
</dbReference>
<dbReference type="neXtProt" id="NX_Q7Z736"/>
<dbReference type="OpenTargets" id="ENSG00000068137"/>
<dbReference type="PharmGKB" id="PA143485577"/>
<dbReference type="VEuPathDB" id="HostDB:ENSG00000068137"/>
<dbReference type="eggNOG" id="KOG4229">
    <property type="taxonomic scope" value="Eukaryota"/>
</dbReference>
<dbReference type="GeneTree" id="ENSGT00940000159764"/>
<dbReference type="HOGENOM" id="CLU_001626_4_0_1"/>
<dbReference type="InParanoid" id="Q7Z736"/>
<dbReference type="OMA" id="QCLMGDF"/>
<dbReference type="OrthoDB" id="6108017at2759"/>
<dbReference type="PAN-GO" id="Q7Z736">
    <property type="GO annotations" value="0 GO annotations based on evolutionary models"/>
</dbReference>
<dbReference type="PhylomeDB" id="Q7Z736"/>
<dbReference type="PathwayCommons" id="Q7Z736"/>
<dbReference type="SignaLink" id="Q7Z736"/>
<dbReference type="BioGRID-ORCS" id="79990">
    <property type="hits" value="20 hits in 1156 CRISPR screens"/>
</dbReference>
<dbReference type="ChiTaRS" id="PLEKHH3">
    <property type="organism name" value="human"/>
</dbReference>
<dbReference type="GenomeRNAi" id="79990"/>
<dbReference type="Pharos" id="Q7Z736">
    <property type="development level" value="Tdark"/>
</dbReference>
<dbReference type="PRO" id="PR:Q7Z736"/>
<dbReference type="Proteomes" id="UP000005640">
    <property type="component" value="Chromosome 17"/>
</dbReference>
<dbReference type="RNAct" id="Q7Z736">
    <property type="molecule type" value="protein"/>
</dbReference>
<dbReference type="Bgee" id="ENSG00000068137">
    <property type="expression patterns" value="Expressed in lower esophagus mucosa and 131 other cell types or tissues"/>
</dbReference>
<dbReference type="ExpressionAtlas" id="Q7Z736">
    <property type="expression patterns" value="baseline and differential"/>
</dbReference>
<dbReference type="GO" id="GO:0005856">
    <property type="term" value="C:cytoskeleton"/>
    <property type="evidence" value="ECO:0007669"/>
    <property type="project" value="InterPro"/>
</dbReference>
<dbReference type="GO" id="GO:0005615">
    <property type="term" value="C:extracellular space"/>
    <property type="evidence" value="ECO:0007005"/>
    <property type="project" value="UniProtKB"/>
</dbReference>
<dbReference type="CDD" id="cd13297">
    <property type="entry name" value="PH3_MyoX-like"/>
    <property type="match status" value="1"/>
</dbReference>
<dbReference type="FunFam" id="1.25.40.530:FF:000001">
    <property type="entry name" value="Pleckstrin homology domain-containing family H member 2"/>
    <property type="match status" value="1"/>
</dbReference>
<dbReference type="FunFam" id="2.30.29.30:FF:000276">
    <property type="entry name" value="pleckstrin homology domain-containing family H member 3"/>
    <property type="match status" value="1"/>
</dbReference>
<dbReference type="FunFam" id="3.10.20.90:FF:000182">
    <property type="entry name" value="pleckstrin homology domain-containing family H member 3 isoform X1"/>
    <property type="match status" value="1"/>
</dbReference>
<dbReference type="FunFam" id="1.20.80.10:FF:000025">
    <property type="entry name" value="pleckstrin homology domain-containing family H member 3 isoform X2"/>
    <property type="match status" value="1"/>
</dbReference>
<dbReference type="FunFam" id="2.30.29.30:FF:000284">
    <property type="entry name" value="pleckstrin homology domain-containing family H member 3 isoform X2"/>
    <property type="match status" value="1"/>
</dbReference>
<dbReference type="Gene3D" id="1.20.80.10">
    <property type="match status" value="1"/>
</dbReference>
<dbReference type="Gene3D" id="1.25.40.530">
    <property type="entry name" value="MyTH4 domain"/>
    <property type="match status" value="1"/>
</dbReference>
<dbReference type="Gene3D" id="3.10.20.90">
    <property type="entry name" value="Phosphatidylinositol 3-kinase Catalytic Subunit, Chain A, domain 1"/>
    <property type="match status" value="1"/>
</dbReference>
<dbReference type="Gene3D" id="2.30.29.30">
    <property type="entry name" value="Pleckstrin-homology domain (PH domain)/Phosphotyrosine-binding domain (PTB)"/>
    <property type="match status" value="2"/>
</dbReference>
<dbReference type="InterPro" id="IPR051724">
    <property type="entry name" value="Actin_motor_Myosin"/>
</dbReference>
<dbReference type="InterPro" id="IPR019749">
    <property type="entry name" value="Band_41_domain"/>
</dbReference>
<dbReference type="InterPro" id="IPR014352">
    <property type="entry name" value="FERM/acyl-CoA-bd_prot_sf"/>
</dbReference>
<dbReference type="InterPro" id="IPR035963">
    <property type="entry name" value="FERM_2"/>
</dbReference>
<dbReference type="InterPro" id="IPR019748">
    <property type="entry name" value="FERM_central"/>
</dbReference>
<dbReference type="InterPro" id="IPR000299">
    <property type="entry name" value="FERM_domain"/>
</dbReference>
<dbReference type="InterPro" id="IPR000857">
    <property type="entry name" value="MyTH4_dom"/>
</dbReference>
<dbReference type="InterPro" id="IPR038185">
    <property type="entry name" value="MyTH4_dom_sf"/>
</dbReference>
<dbReference type="InterPro" id="IPR011993">
    <property type="entry name" value="PH-like_dom_sf"/>
</dbReference>
<dbReference type="InterPro" id="IPR001849">
    <property type="entry name" value="PH_domain"/>
</dbReference>
<dbReference type="PANTHER" id="PTHR46049">
    <property type="entry name" value="AGAP003327-PA"/>
    <property type="match status" value="1"/>
</dbReference>
<dbReference type="PANTHER" id="PTHR46049:SF5">
    <property type="entry name" value="PLECKSTRIN HOMOLOGY DOMAIN-CONTAINING FAMILY H MEMBER 3"/>
    <property type="match status" value="1"/>
</dbReference>
<dbReference type="Pfam" id="PF00373">
    <property type="entry name" value="FERM_M"/>
    <property type="match status" value="1"/>
</dbReference>
<dbReference type="Pfam" id="PF00784">
    <property type="entry name" value="MyTH4"/>
    <property type="match status" value="1"/>
</dbReference>
<dbReference type="Pfam" id="PF21989">
    <property type="entry name" value="RA_2"/>
    <property type="match status" value="1"/>
</dbReference>
<dbReference type="SMART" id="SM00295">
    <property type="entry name" value="B41"/>
    <property type="match status" value="1"/>
</dbReference>
<dbReference type="SMART" id="SM00139">
    <property type="entry name" value="MyTH4"/>
    <property type="match status" value="1"/>
</dbReference>
<dbReference type="SMART" id="SM00233">
    <property type="entry name" value="PH"/>
    <property type="match status" value="1"/>
</dbReference>
<dbReference type="SUPFAM" id="SSF50729">
    <property type="entry name" value="PH domain-like"/>
    <property type="match status" value="1"/>
</dbReference>
<dbReference type="SUPFAM" id="SSF47031">
    <property type="entry name" value="Second domain of FERM"/>
    <property type="match status" value="1"/>
</dbReference>
<dbReference type="PROSITE" id="PS50057">
    <property type="entry name" value="FERM_3"/>
    <property type="match status" value="1"/>
</dbReference>
<dbReference type="PROSITE" id="PS51016">
    <property type="entry name" value="MYTH4"/>
    <property type="match status" value="1"/>
</dbReference>
<dbReference type="PROSITE" id="PS50003">
    <property type="entry name" value="PH_DOMAIN"/>
    <property type="match status" value="1"/>
</dbReference>
<feature type="signal peptide" evidence="1">
    <location>
        <begin position="1"/>
        <end position="18"/>
    </location>
</feature>
<feature type="chain" id="PRO_0000311108" description="Pleckstrin homology domain-containing family H member 3">
    <location>
        <begin position="19"/>
        <end position="793"/>
    </location>
</feature>
<feature type="domain" description="PH" evidence="3">
    <location>
        <begin position="95"/>
        <end position="199"/>
    </location>
</feature>
<feature type="domain" description="MyTH4" evidence="4">
    <location>
        <begin position="237"/>
        <end position="399"/>
    </location>
</feature>
<feature type="domain" description="FERM" evidence="2">
    <location>
        <begin position="404"/>
        <end position="754"/>
    </location>
</feature>
<feature type="region of interest" description="Disordered" evidence="5">
    <location>
        <begin position="28"/>
        <end position="62"/>
    </location>
</feature>
<feature type="region of interest" description="Disordered" evidence="5">
    <location>
        <begin position="554"/>
        <end position="586"/>
    </location>
</feature>
<feature type="region of interest" description="Disordered" evidence="5">
    <location>
        <begin position="598"/>
        <end position="622"/>
    </location>
</feature>
<feature type="region of interest" description="Disordered" evidence="5">
    <location>
        <begin position="750"/>
        <end position="793"/>
    </location>
</feature>
<feature type="compositionally biased region" description="Acidic residues" evidence="5">
    <location>
        <begin position="29"/>
        <end position="41"/>
    </location>
</feature>
<feature type="compositionally biased region" description="Basic residues" evidence="5">
    <location>
        <begin position="598"/>
        <end position="608"/>
    </location>
</feature>
<feature type="compositionally biased region" description="Low complexity" evidence="5">
    <location>
        <begin position="750"/>
        <end position="762"/>
    </location>
</feature>
<feature type="compositionally biased region" description="Polar residues" evidence="5">
    <location>
        <begin position="782"/>
        <end position="793"/>
    </location>
</feature>
<feature type="modified residue" description="Phosphoserine" evidence="12">
    <location>
        <position position="30"/>
    </location>
</feature>
<feature type="modified residue" description="Omega-N-methylarginine" evidence="13">
    <location>
        <position position="638"/>
    </location>
</feature>
<feature type="modified residue" description="Omega-N-methylarginine" evidence="13">
    <location>
        <position position="642"/>
    </location>
</feature>
<feature type="splice variant" id="VSP_029392" description="In isoform 2 and isoform 4." evidence="8 10">
    <original>RFEN</original>
    <variation>S</variation>
    <location>
        <begin position="471"/>
        <end position="474"/>
    </location>
</feature>
<feature type="splice variant" id="VSP_029393" description="In isoform 4." evidence="8">
    <original>FLFEQAHALLLRGRPPPP</original>
    <variation>RGHDFPPACSLGQDCSEI</variation>
    <location>
        <begin position="514"/>
        <end position="531"/>
    </location>
</feature>
<feature type="splice variant" id="VSP_029394" description="In isoform 4." evidence="8">
    <location>
        <begin position="532"/>
        <end position="705"/>
    </location>
</feature>
<feature type="splice variant" id="VSP_029395" description="In isoform 3." evidence="9">
    <original>YDVLELSTEPGRGAPQKLCLGLGAKAMSLSRPGETEPIHSVS</original>
    <variation>SLVGVLHRSCAWAWEPRPCPSPGQGRRSPSTVSAMAMWPPAS</variation>
    <location>
        <begin position="664"/>
        <end position="705"/>
    </location>
</feature>
<feature type="splice variant" id="VSP_029396" description="In isoform 2." evidence="10">
    <original>EPGRGAPQKLCLGLGAKAMSLSRPGETEPIHSVSYGHVAACQLMGPHTLALRVGESQLLLQSPQV</original>
    <variation>VRGRREKGTLAAQAPHLCPRATGPTECHVIPHIQNSYPSQTPGVTSPWALTSLEPQPPPHTCCES</variation>
    <location>
        <begin position="672"/>
        <end position="736"/>
    </location>
</feature>
<feature type="splice variant" id="VSP_029397" description="In isoform 3." evidence="9">
    <location>
        <begin position="706"/>
        <end position="793"/>
    </location>
</feature>
<feature type="splice variant" id="VSP_029398" description="In isoform 2." evidence="10">
    <location>
        <begin position="737"/>
        <end position="793"/>
    </location>
</feature>
<feature type="sequence variant" id="VAR_061520" description="In dbSNP:rs8071056." evidence="6 7">
    <original>Q</original>
    <variation>H</variation>
    <location>
        <position position="547"/>
    </location>
</feature>
<feature type="sequence conflict" description="In Ref. 1; BAB14956." evidence="11" ref="1">
    <original>P</original>
    <variation>L</variation>
    <location>
        <position position="117"/>
    </location>
</feature>
<feature type="sequence conflict" description="In Ref. 1; BAB14956." evidence="11" ref="1">
    <original>V</original>
    <variation>A</variation>
    <location>
        <position position="123"/>
    </location>
</feature>
<reference key="1">
    <citation type="journal article" date="2004" name="Nat. Genet.">
        <title>Complete sequencing and characterization of 21,243 full-length human cDNAs.</title>
        <authorList>
            <person name="Ota T."/>
            <person name="Suzuki Y."/>
            <person name="Nishikawa T."/>
            <person name="Otsuki T."/>
            <person name="Sugiyama T."/>
            <person name="Irie R."/>
            <person name="Wakamatsu A."/>
            <person name="Hayashi K."/>
            <person name="Sato H."/>
            <person name="Nagai K."/>
            <person name="Kimura K."/>
            <person name="Makita H."/>
            <person name="Sekine M."/>
            <person name="Obayashi M."/>
            <person name="Nishi T."/>
            <person name="Shibahara T."/>
            <person name="Tanaka T."/>
            <person name="Ishii S."/>
            <person name="Yamamoto J."/>
            <person name="Saito K."/>
            <person name="Kawai Y."/>
            <person name="Isono Y."/>
            <person name="Nakamura Y."/>
            <person name="Nagahari K."/>
            <person name="Murakami K."/>
            <person name="Yasuda T."/>
            <person name="Iwayanagi T."/>
            <person name="Wagatsuma M."/>
            <person name="Shiratori A."/>
            <person name="Sudo H."/>
            <person name="Hosoiri T."/>
            <person name="Kaku Y."/>
            <person name="Kodaira H."/>
            <person name="Kondo H."/>
            <person name="Sugawara M."/>
            <person name="Takahashi M."/>
            <person name="Kanda K."/>
            <person name="Yokoi T."/>
            <person name="Furuya T."/>
            <person name="Kikkawa E."/>
            <person name="Omura Y."/>
            <person name="Abe K."/>
            <person name="Kamihara K."/>
            <person name="Katsuta N."/>
            <person name="Sato K."/>
            <person name="Tanikawa M."/>
            <person name="Yamazaki M."/>
            <person name="Ninomiya K."/>
            <person name="Ishibashi T."/>
            <person name="Yamashita H."/>
            <person name="Murakawa K."/>
            <person name="Fujimori K."/>
            <person name="Tanai H."/>
            <person name="Kimata M."/>
            <person name="Watanabe M."/>
            <person name="Hiraoka S."/>
            <person name="Chiba Y."/>
            <person name="Ishida S."/>
            <person name="Ono Y."/>
            <person name="Takiguchi S."/>
            <person name="Watanabe S."/>
            <person name="Yosida M."/>
            <person name="Hotuta T."/>
            <person name="Kusano J."/>
            <person name="Kanehori K."/>
            <person name="Takahashi-Fujii A."/>
            <person name="Hara H."/>
            <person name="Tanase T.-O."/>
            <person name="Nomura Y."/>
            <person name="Togiya S."/>
            <person name="Komai F."/>
            <person name="Hara R."/>
            <person name="Takeuchi K."/>
            <person name="Arita M."/>
            <person name="Imose N."/>
            <person name="Musashino K."/>
            <person name="Yuuki H."/>
            <person name="Oshima A."/>
            <person name="Sasaki N."/>
            <person name="Aotsuka S."/>
            <person name="Yoshikawa Y."/>
            <person name="Matsunawa H."/>
            <person name="Ichihara T."/>
            <person name="Shiohata N."/>
            <person name="Sano S."/>
            <person name="Moriya S."/>
            <person name="Momiyama H."/>
            <person name="Satoh N."/>
            <person name="Takami S."/>
            <person name="Terashima Y."/>
            <person name="Suzuki O."/>
            <person name="Nakagawa S."/>
            <person name="Senoh A."/>
            <person name="Mizoguchi H."/>
            <person name="Goto Y."/>
            <person name="Shimizu F."/>
            <person name="Wakebe H."/>
            <person name="Hishigaki H."/>
            <person name="Watanabe T."/>
            <person name="Sugiyama A."/>
            <person name="Takemoto M."/>
            <person name="Kawakami B."/>
            <person name="Yamazaki M."/>
            <person name="Watanabe K."/>
            <person name="Kumagai A."/>
            <person name="Itakura S."/>
            <person name="Fukuzumi Y."/>
            <person name="Fujimori Y."/>
            <person name="Komiyama M."/>
            <person name="Tashiro H."/>
            <person name="Tanigami A."/>
            <person name="Fujiwara T."/>
            <person name="Ono T."/>
            <person name="Yamada K."/>
            <person name="Fujii Y."/>
            <person name="Ozaki K."/>
            <person name="Hirao M."/>
            <person name="Ohmori Y."/>
            <person name="Kawabata A."/>
            <person name="Hikiji T."/>
            <person name="Kobatake N."/>
            <person name="Inagaki H."/>
            <person name="Ikema Y."/>
            <person name="Okamoto S."/>
            <person name="Okitani R."/>
            <person name="Kawakami T."/>
            <person name="Noguchi S."/>
            <person name="Itoh T."/>
            <person name="Shigeta K."/>
            <person name="Senba T."/>
            <person name="Matsumura K."/>
            <person name="Nakajima Y."/>
            <person name="Mizuno T."/>
            <person name="Morinaga M."/>
            <person name="Sasaki M."/>
            <person name="Togashi T."/>
            <person name="Oyama M."/>
            <person name="Hata H."/>
            <person name="Watanabe M."/>
            <person name="Komatsu T."/>
            <person name="Mizushima-Sugano J."/>
            <person name="Satoh T."/>
            <person name="Shirai Y."/>
            <person name="Takahashi Y."/>
            <person name="Nakagawa K."/>
            <person name="Okumura K."/>
            <person name="Nagase T."/>
            <person name="Nomura N."/>
            <person name="Kikuchi H."/>
            <person name="Masuho Y."/>
            <person name="Yamashita R."/>
            <person name="Nakai K."/>
            <person name="Yada T."/>
            <person name="Nakamura Y."/>
            <person name="Ohara O."/>
            <person name="Isogai T."/>
            <person name="Sugano S."/>
        </authorList>
    </citation>
    <scope>NUCLEOTIDE SEQUENCE [LARGE SCALE MRNA] (ISOFORM 4)</scope>
</reference>
<reference key="2">
    <citation type="submission" date="2005-03" db="EMBL/GenBank/DDBJ databases">
        <authorList>
            <person name="Totoki Y."/>
            <person name="Toyoda A."/>
            <person name="Takeda T."/>
            <person name="Sakaki Y."/>
            <person name="Tanaka A."/>
            <person name="Yokoyama S."/>
            <person name="Ohara O."/>
            <person name="Nagase T."/>
            <person name="Kikuno R.F."/>
        </authorList>
    </citation>
    <scope>NUCLEOTIDE SEQUENCE [LARGE SCALE MRNA] (ISOFORM 2)</scope>
    <scope>VARIANT HIS-547</scope>
    <source>
        <tissue>Brain</tissue>
    </source>
</reference>
<reference key="3">
    <citation type="journal article" date="2006" name="Nature">
        <title>DNA sequence of human chromosome 17 and analysis of rearrangement in the human lineage.</title>
        <authorList>
            <person name="Zody M.C."/>
            <person name="Garber M."/>
            <person name="Adams D.J."/>
            <person name="Sharpe T."/>
            <person name="Harrow J."/>
            <person name="Lupski J.R."/>
            <person name="Nicholson C."/>
            <person name="Searle S.M."/>
            <person name="Wilming L."/>
            <person name="Young S.K."/>
            <person name="Abouelleil A."/>
            <person name="Allen N.R."/>
            <person name="Bi W."/>
            <person name="Bloom T."/>
            <person name="Borowsky M.L."/>
            <person name="Bugalter B.E."/>
            <person name="Butler J."/>
            <person name="Chang J.L."/>
            <person name="Chen C.-K."/>
            <person name="Cook A."/>
            <person name="Corum B."/>
            <person name="Cuomo C.A."/>
            <person name="de Jong P.J."/>
            <person name="DeCaprio D."/>
            <person name="Dewar K."/>
            <person name="FitzGerald M."/>
            <person name="Gilbert J."/>
            <person name="Gibson R."/>
            <person name="Gnerre S."/>
            <person name="Goldstein S."/>
            <person name="Grafham D.V."/>
            <person name="Grocock R."/>
            <person name="Hafez N."/>
            <person name="Hagopian D.S."/>
            <person name="Hart E."/>
            <person name="Norman C.H."/>
            <person name="Humphray S."/>
            <person name="Jaffe D.B."/>
            <person name="Jones M."/>
            <person name="Kamal M."/>
            <person name="Khodiyar V.K."/>
            <person name="LaButti K."/>
            <person name="Laird G."/>
            <person name="Lehoczky J."/>
            <person name="Liu X."/>
            <person name="Lokyitsang T."/>
            <person name="Loveland J."/>
            <person name="Lui A."/>
            <person name="Macdonald P."/>
            <person name="Major J.E."/>
            <person name="Matthews L."/>
            <person name="Mauceli E."/>
            <person name="McCarroll S.A."/>
            <person name="Mihalev A.H."/>
            <person name="Mudge J."/>
            <person name="Nguyen C."/>
            <person name="Nicol R."/>
            <person name="O'Leary S.B."/>
            <person name="Osoegawa K."/>
            <person name="Schwartz D.C."/>
            <person name="Shaw-Smith C."/>
            <person name="Stankiewicz P."/>
            <person name="Steward C."/>
            <person name="Swarbreck D."/>
            <person name="Venkataraman V."/>
            <person name="Whittaker C.A."/>
            <person name="Yang X."/>
            <person name="Zimmer A.R."/>
            <person name="Bradley A."/>
            <person name="Hubbard T."/>
            <person name="Birren B.W."/>
            <person name="Rogers J."/>
            <person name="Lander E.S."/>
            <person name="Nusbaum C."/>
        </authorList>
    </citation>
    <scope>NUCLEOTIDE SEQUENCE [LARGE SCALE GENOMIC DNA]</scope>
</reference>
<reference key="4">
    <citation type="journal article" date="2004" name="Genome Res.">
        <title>The status, quality, and expansion of the NIH full-length cDNA project: the Mammalian Gene Collection (MGC).</title>
        <authorList>
            <consortium name="The MGC Project Team"/>
        </authorList>
    </citation>
    <scope>NUCLEOTIDE SEQUENCE [LARGE SCALE MRNA] (ISOFORMS 1 AND 3)</scope>
    <scope>VARIANT HIS-547</scope>
    <source>
        <tissue>Pancreas</tissue>
        <tissue>Uterus</tissue>
    </source>
</reference>
<reference key="5">
    <citation type="journal article" date="2007" name="BMC Genomics">
        <title>The full-ORF clone resource of the German cDNA consortium.</title>
        <authorList>
            <person name="Bechtel S."/>
            <person name="Rosenfelder H."/>
            <person name="Duda A."/>
            <person name="Schmidt C.P."/>
            <person name="Ernst U."/>
            <person name="Wellenreuther R."/>
            <person name="Mehrle A."/>
            <person name="Schuster C."/>
            <person name="Bahr A."/>
            <person name="Bloecker H."/>
            <person name="Heubner D."/>
            <person name="Hoerlein A."/>
            <person name="Michel G."/>
            <person name="Wedler H."/>
            <person name="Koehrer K."/>
            <person name="Ottenwaelder B."/>
            <person name="Poustka A."/>
            <person name="Wiemann S."/>
            <person name="Schupp I."/>
        </authorList>
    </citation>
    <scope>NUCLEOTIDE SEQUENCE [LARGE SCALE MRNA] OF 593-793</scope>
    <source>
        <tissue>Testis</tissue>
    </source>
</reference>
<reference key="6">
    <citation type="journal article" date="2008" name="Proc. Natl. Acad. Sci. U.S.A.">
        <title>A quantitative atlas of mitotic phosphorylation.</title>
        <authorList>
            <person name="Dephoure N."/>
            <person name="Zhou C."/>
            <person name="Villen J."/>
            <person name="Beausoleil S.A."/>
            <person name="Bakalarski C.E."/>
            <person name="Elledge S.J."/>
            <person name="Gygi S.P."/>
        </authorList>
    </citation>
    <scope>PHOSPHORYLATION [LARGE SCALE ANALYSIS] AT SER-30</scope>
    <scope>IDENTIFICATION BY MASS SPECTROMETRY [LARGE SCALE ANALYSIS]</scope>
    <source>
        <tissue>Cervix carcinoma</tissue>
    </source>
</reference>
<reference key="7">
    <citation type="journal article" date="2014" name="Mol. Cell. Proteomics">
        <title>Immunoaffinity enrichment and mass spectrometry analysis of protein methylation.</title>
        <authorList>
            <person name="Guo A."/>
            <person name="Gu H."/>
            <person name="Zhou J."/>
            <person name="Mulhern D."/>
            <person name="Wang Y."/>
            <person name="Lee K.A."/>
            <person name="Yang V."/>
            <person name="Aguiar M."/>
            <person name="Kornhauser J."/>
            <person name="Jia X."/>
            <person name="Ren J."/>
            <person name="Beausoleil S.A."/>
            <person name="Silva J.C."/>
            <person name="Vemulapalli V."/>
            <person name="Bedford M.T."/>
            <person name="Comb M.J."/>
        </authorList>
    </citation>
    <scope>METHYLATION [LARGE SCALE ANALYSIS] AT ARG-638 AND ARG-642</scope>
    <scope>IDENTIFICATION BY MASS SPECTROMETRY [LARGE SCALE ANALYSIS]</scope>
    <source>
        <tissue>Colon carcinoma</tissue>
    </source>
</reference>
<proteinExistence type="evidence at protein level"/>
<name>PKHH3_HUMAN</name>
<protein>
    <recommendedName>
        <fullName>Pleckstrin homology domain-containing family H member 3</fullName>
        <shortName>PH domain-containing family H member 3</shortName>
    </recommendedName>
</protein>
<sequence>MPLPGGLWWLLCCRRGFTLLHRDYGDGELSGDGDEDEDEETFELRTPSPAGGGRGPLEVTLTQPVRSGPVSNRLQSWEETWSLIPEKGLPEDDPDIVVKGWLYREPRGGGARPWLPPRRAWFVLTRDSLDQFSSSGKGARRLGSLVLTSLCSVTGPERRRKETGLWSVTVSGRKHSVRLCSPRQAEAERWGVALREVIASKAPLETPTQLLLRDIQESCGDPEAVALIYLRNPILRHTSGALYAPLLPLPYGVSAPGPGYAPLREEAVRLFLALQALEGARRPGPLMQGVLQTCRDLPALRDELFLQLAKQTSGPAGPPGLPATQDPAALRYWQLLTCMSCTFRPGGAVRGHLLGHLERTEQALPDSELAEYARFIRKALGRTRGRELVPSLAEISALSQRQELLCTVHCPGAGACAVAIDSHTTAGEVARELVGRLGLARSRNAFALYEQRGAQERALAGGTLVADVLTRFENLAAEEAGLEDSPDSGWRLCLRLHGPLHPEGLSPDGHELPFLFEQAHALLLRGRPPPPDDTLRALAALRLQSLQRDFSPRVPLPRLDRLLPPPAPPREDPPRPTPRPPPSAALLAGALWSPGLAKRRAERARRGGAGRTAGSIAREGGGGAGTAAAVLGGWKRLRGMGRAEAMAAYLALAAQCPGFGAARYDVLELSTEPGRGAPQKLCLGLGAKAMSLSRPGETEPIHSVSYGHVAACQLMGPHTLALRVGESQLLLQSPQVEEIMQLVNAYLANPSPERPCSSSSPPCQDLPDTSPPSQRPGLDEPQGQSGCLGQLQD</sequence>
<organism>
    <name type="scientific">Homo sapiens</name>
    <name type="common">Human</name>
    <dbReference type="NCBI Taxonomy" id="9606"/>
    <lineage>
        <taxon>Eukaryota</taxon>
        <taxon>Metazoa</taxon>
        <taxon>Chordata</taxon>
        <taxon>Craniata</taxon>
        <taxon>Vertebrata</taxon>
        <taxon>Euteleostomi</taxon>
        <taxon>Mammalia</taxon>
        <taxon>Eutheria</taxon>
        <taxon>Euarchontoglires</taxon>
        <taxon>Primates</taxon>
        <taxon>Haplorrhini</taxon>
        <taxon>Catarrhini</taxon>
        <taxon>Hominidae</taxon>
        <taxon>Homo</taxon>
    </lineage>
</organism>
<accession>Q7Z736</accession>
<accession>C9JQ76</accession>
<accession>Q59H20</accession>
<accession>Q96B28</accession>
<accession>Q9H7D6</accession>
<accession>Q9NT18</accession>
<evidence type="ECO:0000255" key="1"/>
<evidence type="ECO:0000255" key="2">
    <source>
        <dbReference type="PROSITE-ProRule" id="PRU00084"/>
    </source>
</evidence>
<evidence type="ECO:0000255" key="3">
    <source>
        <dbReference type="PROSITE-ProRule" id="PRU00145"/>
    </source>
</evidence>
<evidence type="ECO:0000255" key="4">
    <source>
        <dbReference type="PROSITE-ProRule" id="PRU00359"/>
    </source>
</evidence>
<evidence type="ECO:0000256" key="5">
    <source>
        <dbReference type="SAM" id="MobiDB-lite"/>
    </source>
</evidence>
<evidence type="ECO:0000269" key="6">
    <source>
    </source>
</evidence>
<evidence type="ECO:0000269" key="7">
    <source ref="2"/>
</evidence>
<evidence type="ECO:0000303" key="8">
    <source>
    </source>
</evidence>
<evidence type="ECO:0000303" key="9">
    <source>
    </source>
</evidence>
<evidence type="ECO:0000303" key="10">
    <source ref="2"/>
</evidence>
<evidence type="ECO:0000305" key="11"/>
<evidence type="ECO:0007744" key="12">
    <source>
    </source>
</evidence>
<evidence type="ECO:0007744" key="13">
    <source>
    </source>
</evidence>